<proteinExistence type="evidence at protein level"/>
<reference key="1">
    <citation type="journal article" date="2005" name="Science">
        <title>The transcriptional landscape of the mammalian genome.</title>
        <authorList>
            <person name="Carninci P."/>
            <person name="Kasukawa T."/>
            <person name="Katayama S."/>
            <person name="Gough J."/>
            <person name="Frith M.C."/>
            <person name="Maeda N."/>
            <person name="Oyama R."/>
            <person name="Ravasi T."/>
            <person name="Lenhard B."/>
            <person name="Wells C."/>
            <person name="Kodzius R."/>
            <person name="Shimokawa K."/>
            <person name="Bajic V.B."/>
            <person name="Brenner S.E."/>
            <person name="Batalov S."/>
            <person name="Forrest A.R."/>
            <person name="Zavolan M."/>
            <person name="Davis M.J."/>
            <person name="Wilming L.G."/>
            <person name="Aidinis V."/>
            <person name="Allen J.E."/>
            <person name="Ambesi-Impiombato A."/>
            <person name="Apweiler R."/>
            <person name="Aturaliya R.N."/>
            <person name="Bailey T.L."/>
            <person name="Bansal M."/>
            <person name="Baxter L."/>
            <person name="Beisel K.W."/>
            <person name="Bersano T."/>
            <person name="Bono H."/>
            <person name="Chalk A.M."/>
            <person name="Chiu K.P."/>
            <person name="Choudhary V."/>
            <person name="Christoffels A."/>
            <person name="Clutterbuck D.R."/>
            <person name="Crowe M.L."/>
            <person name="Dalla E."/>
            <person name="Dalrymple B.P."/>
            <person name="de Bono B."/>
            <person name="Della Gatta G."/>
            <person name="di Bernardo D."/>
            <person name="Down T."/>
            <person name="Engstrom P."/>
            <person name="Fagiolini M."/>
            <person name="Faulkner G."/>
            <person name="Fletcher C.F."/>
            <person name="Fukushima T."/>
            <person name="Furuno M."/>
            <person name="Futaki S."/>
            <person name="Gariboldi M."/>
            <person name="Georgii-Hemming P."/>
            <person name="Gingeras T.R."/>
            <person name="Gojobori T."/>
            <person name="Green R.E."/>
            <person name="Gustincich S."/>
            <person name="Harbers M."/>
            <person name="Hayashi Y."/>
            <person name="Hensch T.K."/>
            <person name="Hirokawa N."/>
            <person name="Hill D."/>
            <person name="Huminiecki L."/>
            <person name="Iacono M."/>
            <person name="Ikeo K."/>
            <person name="Iwama A."/>
            <person name="Ishikawa T."/>
            <person name="Jakt M."/>
            <person name="Kanapin A."/>
            <person name="Katoh M."/>
            <person name="Kawasawa Y."/>
            <person name="Kelso J."/>
            <person name="Kitamura H."/>
            <person name="Kitano H."/>
            <person name="Kollias G."/>
            <person name="Krishnan S.P."/>
            <person name="Kruger A."/>
            <person name="Kummerfeld S.K."/>
            <person name="Kurochkin I.V."/>
            <person name="Lareau L.F."/>
            <person name="Lazarevic D."/>
            <person name="Lipovich L."/>
            <person name="Liu J."/>
            <person name="Liuni S."/>
            <person name="McWilliam S."/>
            <person name="Madan Babu M."/>
            <person name="Madera M."/>
            <person name="Marchionni L."/>
            <person name="Matsuda H."/>
            <person name="Matsuzawa S."/>
            <person name="Miki H."/>
            <person name="Mignone F."/>
            <person name="Miyake S."/>
            <person name="Morris K."/>
            <person name="Mottagui-Tabar S."/>
            <person name="Mulder N."/>
            <person name="Nakano N."/>
            <person name="Nakauchi H."/>
            <person name="Ng P."/>
            <person name="Nilsson R."/>
            <person name="Nishiguchi S."/>
            <person name="Nishikawa S."/>
            <person name="Nori F."/>
            <person name="Ohara O."/>
            <person name="Okazaki Y."/>
            <person name="Orlando V."/>
            <person name="Pang K.C."/>
            <person name="Pavan W.J."/>
            <person name="Pavesi G."/>
            <person name="Pesole G."/>
            <person name="Petrovsky N."/>
            <person name="Piazza S."/>
            <person name="Reed J."/>
            <person name="Reid J.F."/>
            <person name="Ring B.Z."/>
            <person name="Ringwald M."/>
            <person name="Rost B."/>
            <person name="Ruan Y."/>
            <person name="Salzberg S.L."/>
            <person name="Sandelin A."/>
            <person name="Schneider C."/>
            <person name="Schoenbach C."/>
            <person name="Sekiguchi K."/>
            <person name="Semple C.A."/>
            <person name="Seno S."/>
            <person name="Sessa L."/>
            <person name="Sheng Y."/>
            <person name="Shibata Y."/>
            <person name="Shimada H."/>
            <person name="Shimada K."/>
            <person name="Silva D."/>
            <person name="Sinclair B."/>
            <person name="Sperling S."/>
            <person name="Stupka E."/>
            <person name="Sugiura K."/>
            <person name="Sultana R."/>
            <person name="Takenaka Y."/>
            <person name="Taki K."/>
            <person name="Tammoja K."/>
            <person name="Tan S.L."/>
            <person name="Tang S."/>
            <person name="Taylor M.S."/>
            <person name="Tegner J."/>
            <person name="Teichmann S.A."/>
            <person name="Ueda H.R."/>
            <person name="van Nimwegen E."/>
            <person name="Verardo R."/>
            <person name="Wei C.L."/>
            <person name="Yagi K."/>
            <person name="Yamanishi H."/>
            <person name="Zabarovsky E."/>
            <person name="Zhu S."/>
            <person name="Zimmer A."/>
            <person name="Hide W."/>
            <person name="Bult C."/>
            <person name="Grimmond S.M."/>
            <person name="Teasdale R.D."/>
            <person name="Liu E.T."/>
            <person name="Brusic V."/>
            <person name="Quackenbush J."/>
            <person name="Wahlestedt C."/>
            <person name="Mattick J.S."/>
            <person name="Hume D.A."/>
            <person name="Kai C."/>
            <person name="Sasaki D."/>
            <person name="Tomaru Y."/>
            <person name="Fukuda S."/>
            <person name="Kanamori-Katayama M."/>
            <person name="Suzuki M."/>
            <person name="Aoki J."/>
            <person name="Arakawa T."/>
            <person name="Iida J."/>
            <person name="Imamura K."/>
            <person name="Itoh M."/>
            <person name="Kato T."/>
            <person name="Kawaji H."/>
            <person name="Kawagashira N."/>
            <person name="Kawashima T."/>
            <person name="Kojima M."/>
            <person name="Kondo S."/>
            <person name="Konno H."/>
            <person name="Nakano K."/>
            <person name="Ninomiya N."/>
            <person name="Nishio T."/>
            <person name="Okada M."/>
            <person name="Plessy C."/>
            <person name="Shibata K."/>
            <person name="Shiraki T."/>
            <person name="Suzuki S."/>
            <person name="Tagami M."/>
            <person name="Waki K."/>
            <person name="Watahiki A."/>
            <person name="Okamura-Oho Y."/>
            <person name="Suzuki H."/>
            <person name="Kawai J."/>
            <person name="Hayashizaki Y."/>
        </authorList>
    </citation>
    <scope>NUCLEOTIDE SEQUENCE [LARGE SCALE MRNA] (ISOFORMS 1; 2 AND 4)</scope>
    <source>
        <strain>C57BL/6J</strain>
        <strain>NOD</strain>
        <tissue>Egg</tissue>
        <tissue>Embryo</tissue>
        <tissue>Kidney</tissue>
        <tissue>Spleen</tissue>
    </source>
</reference>
<reference key="2">
    <citation type="journal article" date="2004" name="Genome Res.">
        <title>The status, quality, and expansion of the NIH full-length cDNA project: the Mammalian Gene Collection (MGC).</title>
        <authorList>
            <consortium name="The MGC Project Team"/>
        </authorList>
    </citation>
    <scope>NUCLEOTIDE SEQUENCE [LARGE SCALE MRNA] (ISOFORMS 1; 3 AND 5)</scope>
    <source>
        <strain>C57BL/6J</strain>
        <strain>FVB/N-3</strain>
        <tissue>Brain</tissue>
        <tissue>Mammary tumor</tissue>
    </source>
</reference>
<reference key="3">
    <citation type="journal article" date="2006" name="Circ. Res.">
        <title>Embryonic growth-associated protein is one subunit of a novel N-terminal acetyltransferase complex essential for embryonic vascular development.</title>
        <authorList>
            <person name="Wenzlau J.M."/>
            <person name="Garl P.J."/>
            <person name="Simpson P."/>
            <person name="Stenmark K.R."/>
            <person name="West J."/>
            <person name="Artinger K.B."/>
            <person name="Nemenoff R.A."/>
            <person name="Weiser-Evans M.C.M."/>
        </authorList>
    </citation>
    <scope>INTERACTION WITH NAA35</scope>
    <scope>SUBCELLULAR LOCATION</scope>
</reference>
<reference key="4">
    <citation type="journal article" date="2010" name="Cell">
        <title>A tissue-specific atlas of mouse protein phosphorylation and expression.</title>
        <authorList>
            <person name="Huttlin E.L."/>
            <person name="Jedrychowski M.P."/>
            <person name="Elias J.E."/>
            <person name="Goswami T."/>
            <person name="Rad R."/>
            <person name="Beausoleil S.A."/>
            <person name="Villen J."/>
            <person name="Haas W."/>
            <person name="Sowa M.E."/>
            <person name="Gygi S.P."/>
        </authorList>
    </citation>
    <scope>IDENTIFICATION BY MASS SPECTROMETRY [LARGE SCALE ANALYSIS]</scope>
    <source>
        <tissue>Brain</tissue>
        <tissue>Brown adipose tissue</tissue>
        <tissue>Heart</tissue>
        <tissue>Kidney</tissue>
        <tissue>Liver</tissue>
        <tissue>Lung</tissue>
        <tissue>Pancreas</tissue>
        <tissue>Spleen</tissue>
        <tissue>Testis</tissue>
    </source>
</reference>
<reference key="5">
    <citation type="journal article" date="2013" name="Mol. Cell">
        <title>SIRT5-mediated lysine desuccinylation impacts diverse metabolic pathways.</title>
        <authorList>
            <person name="Park J."/>
            <person name="Chen Y."/>
            <person name="Tishkoff D.X."/>
            <person name="Peng C."/>
            <person name="Tan M."/>
            <person name="Dai L."/>
            <person name="Xie Z."/>
            <person name="Zhang Y."/>
            <person name="Zwaans B.M."/>
            <person name="Skinner M.E."/>
            <person name="Lombard D.B."/>
            <person name="Zhao Y."/>
        </authorList>
    </citation>
    <scope>ACETYLATION [LARGE SCALE ANALYSIS] AT LYS-34 AND LYS-37</scope>
    <scope>IDENTIFICATION BY MASS SPECTROMETRY [LARGE SCALE ANALYSIS]</scope>
    <source>
        <tissue>Embryonic fibroblast</tissue>
    </source>
</reference>
<name>NAA50_MOUSE</name>
<organism>
    <name type="scientific">Mus musculus</name>
    <name type="common">Mouse</name>
    <dbReference type="NCBI Taxonomy" id="10090"/>
    <lineage>
        <taxon>Eukaryota</taxon>
        <taxon>Metazoa</taxon>
        <taxon>Chordata</taxon>
        <taxon>Craniata</taxon>
        <taxon>Vertebrata</taxon>
        <taxon>Euteleostomi</taxon>
        <taxon>Mammalia</taxon>
        <taxon>Eutheria</taxon>
        <taxon>Euarchontoglires</taxon>
        <taxon>Glires</taxon>
        <taxon>Rodentia</taxon>
        <taxon>Myomorpha</taxon>
        <taxon>Muroidea</taxon>
        <taxon>Muridae</taxon>
        <taxon>Murinae</taxon>
        <taxon>Mus</taxon>
        <taxon>Mus</taxon>
    </lineage>
</organism>
<gene>
    <name evidence="7" type="primary">Naa50</name>
    <name type="synonym">Mak3</name>
    <name type="synonym">Nat13</name>
</gene>
<protein>
    <recommendedName>
        <fullName>N-alpha-acetyltransferase 50</fullName>
        <ecNumber evidence="1">2.3.1.258</ecNumber>
    </recommendedName>
    <alternativeName>
        <fullName>N-acetyltransferase NAT13</fullName>
    </alternativeName>
    <alternativeName>
        <fullName evidence="1">N-epsilon-acetyltransferase 50</fullName>
        <ecNumber evidence="1">2.3.1.-</ecNumber>
    </alternativeName>
    <alternativeName>
        <fullName>NatE catalytic subunit</fullName>
    </alternativeName>
</protein>
<accession>Q6PGB6</accession>
<accession>Q3TH79</accession>
<accession>Q3TK59</accession>
<accession>Q7TML2</accession>
<accession>Q80VE3</accession>
<accession>Q9D0Q8</accession>
<comment type="function">
    <text evidence="1">N-alpha-acetyltransferase that acetylates the N-terminus of proteins that retain their initiating methionine (By similarity). Has a broad substrate specificity: able to acetylate the initiator methionine of most peptides, except for those with a proline in second position (By similarity). Also displays N-epsilon-acetyltransferase activity by mediating acetylation of the side chain of specific lysines on proteins (By similarity). Autoacetylates in vivo (By similarity). The relevance of N-epsilon-acetyltransferase activity is however unclear: able to acetylate H4 in vitro, but this result has not been confirmed in vivo (By similarity). Component of N-alpha-acetyltransferase complexes containing NAA10 and NAA15, which has N-alpha-acetyltransferase activity (By similarity). Does not influence the acetyltransferase activity of NAA10 (By similarity). However, it negatively regulates the N-alpha-acetyltransferase activity of the N-terminal acetyltransferase A complex (also called the NatA complex) (By similarity). The multiprotein complexes probably constitute the major contributor for N-terminal acetylation at the ribosome exit tunnel, with NAA10 acetylating all amino termini that are devoid of methionine and NAA50 acetylating other peptides (By similarity). Required for sister chromatid cohesion during mitosis by promoting binding of CDCA5/sororin to cohesin: may act by counteracting the function of NAA10 (By similarity).</text>
</comment>
<comment type="catalytic activity">
    <reaction evidence="1">
        <text>N-terminal L-methionyl-L-alanyl-[protein] + acetyl-CoA = N-terminal N(alpha)-acetyl-L-methionyl-L-alanyl-[protein] + CoA + H(+)</text>
        <dbReference type="Rhea" id="RHEA:50564"/>
        <dbReference type="Rhea" id="RHEA-COMP:12726"/>
        <dbReference type="Rhea" id="RHEA-COMP:12727"/>
        <dbReference type="ChEBI" id="CHEBI:15378"/>
        <dbReference type="ChEBI" id="CHEBI:57287"/>
        <dbReference type="ChEBI" id="CHEBI:57288"/>
        <dbReference type="ChEBI" id="CHEBI:133398"/>
        <dbReference type="ChEBI" id="CHEBI:133399"/>
        <dbReference type="EC" id="2.3.1.258"/>
    </reaction>
</comment>
<comment type="catalytic activity">
    <reaction evidence="1">
        <text>N-terminal L-methionyl-L-seryl-[protein] + acetyl-CoA = N-terminal N(alpha)-acetyl-L-methionyl-L-seryl-[protein] + CoA + H(+)</text>
        <dbReference type="Rhea" id="RHEA:50568"/>
        <dbReference type="Rhea" id="RHEA-COMP:12728"/>
        <dbReference type="Rhea" id="RHEA-COMP:12729"/>
        <dbReference type="ChEBI" id="CHEBI:15378"/>
        <dbReference type="ChEBI" id="CHEBI:57287"/>
        <dbReference type="ChEBI" id="CHEBI:57288"/>
        <dbReference type="ChEBI" id="CHEBI:133400"/>
        <dbReference type="ChEBI" id="CHEBI:133401"/>
        <dbReference type="EC" id="2.3.1.258"/>
    </reaction>
</comment>
<comment type="catalytic activity">
    <reaction evidence="1">
        <text>N-terminal L-methionyl-L-valyl-[protein] + acetyl-CoA = N-terminal N(alpha)-acetyl-L-methionyl-L-valyl-[protein] + CoA + H(+)</text>
        <dbReference type="Rhea" id="RHEA:50572"/>
        <dbReference type="Rhea" id="RHEA-COMP:12730"/>
        <dbReference type="Rhea" id="RHEA-COMP:12731"/>
        <dbReference type="ChEBI" id="CHEBI:15378"/>
        <dbReference type="ChEBI" id="CHEBI:57287"/>
        <dbReference type="ChEBI" id="CHEBI:57288"/>
        <dbReference type="ChEBI" id="CHEBI:133402"/>
        <dbReference type="ChEBI" id="CHEBI:133403"/>
        <dbReference type="EC" id="2.3.1.258"/>
    </reaction>
</comment>
<comment type="catalytic activity">
    <reaction evidence="1">
        <text>N-terminal L-methionyl-L-threonyl-[protein] + acetyl-CoA = N-terminal N(alpha)-acetyl-L-methionyl-L-threonyl-[protein] + CoA + H(+)</text>
        <dbReference type="Rhea" id="RHEA:50576"/>
        <dbReference type="Rhea" id="RHEA-COMP:12732"/>
        <dbReference type="Rhea" id="RHEA-COMP:12733"/>
        <dbReference type="ChEBI" id="CHEBI:15378"/>
        <dbReference type="ChEBI" id="CHEBI:57287"/>
        <dbReference type="ChEBI" id="CHEBI:57288"/>
        <dbReference type="ChEBI" id="CHEBI:133404"/>
        <dbReference type="ChEBI" id="CHEBI:133405"/>
        <dbReference type="EC" id="2.3.1.258"/>
    </reaction>
</comment>
<comment type="catalytic activity">
    <reaction evidence="1">
        <text>N-terminal L-methionyl-L-lysyl-[protein] + acetyl-CoA = N-terminal N(alpha)-acetyl-L-methionyl-L-lysyl-[protein] + CoA + H(+)</text>
        <dbReference type="Rhea" id="RHEA:50580"/>
        <dbReference type="Rhea" id="RHEA-COMP:12734"/>
        <dbReference type="Rhea" id="RHEA-COMP:12735"/>
        <dbReference type="ChEBI" id="CHEBI:15378"/>
        <dbReference type="ChEBI" id="CHEBI:57287"/>
        <dbReference type="ChEBI" id="CHEBI:57288"/>
        <dbReference type="ChEBI" id="CHEBI:133406"/>
        <dbReference type="ChEBI" id="CHEBI:133407"/>
        <dbReference type="EC" id="2.3.1.258"/>
    </reaction>
</comment>
<comment type="catalytic activity">
    <reaction evidence="1">
        <text>N-terminal L-methionyl-L-leucyl-[protein] + acetyl-CoA = N-terminal N(alpha)-acetyl-L-methionyl-L-leucyl-[protein] + CoA + H(+)</text>
        <dbReference type="Rhea" id="RHEA:50520"/>
        <dbReference type="Rhea" id="RHEA-COMP:12711"/>
        <dbReference type="Rhea" id="RHEA-COMP:12712"/>
        <dbReference type="ChEBI" id="CHEBI:15378"/>
        <dbReference type="ChEBI" id="CHEBI:57287"/>
        <dbReference type="ChEBI" id="CHEBI:57288"/>
        <dbReference type="ChEBI" id="CHEBI:133377"/>
        <dbReference type="ChEBI" id="CHEBI:133378"/>
        <dbReference type="EC" id="2.3.1.258"/>
    </reaction>
</comment>
<comment type="catalytic activity">
    <reaction evidence="1">
        <text>N-terminal L-methionyl-L-phenylalanyl-[protein] + acetyl-CoA = N-terminal N(alpha)-acetyl-L-methionyl-L-phenylalanyl-[protein] + CoA + H(+)</text>
        <dbReference type="Rhea" id="RHEA:50528"/>
        <dbReference type="Rhea" id="RHEA-COMP:12715"/>
        <dbReference type="Rhea" id="RHEA-COMP:12716"/>
        <dbReference type="ChEBI" id="CHEBI:15378"/>
        <dbReference type="ChEBI" id="CHEBI:57287"/>
        <dbReference type="ChEBI" id="CHEBI:57288"/>
        <dbReference type="ChEBI" id="CHEBI:133382"/>
        <dbReference type="ChEBI" id="CHEBI:133383"/>
        <dbReference type="EC" id="2.3.1.258"/>
    </reaction>
</comment>
<comment type="catalytic activity">
    <reaction evidence="1">
        <text>N-terminal L-methionyl-L-tyrosyl-[protein] + acetyl-CoA = N-terminal N(alpha)-acetyl-L-methionyl-L-tyrosyl-[protein] + CoA + H(+)</text>
        <dbReference type="Rhea" id="RHEA:50532"/>
        <dbReference type="Rhea" id="RHEA-COMP:12717"/>
        <dbReference type="Rhea" id="RHEA-COMP:12718"/>
        <dbReference type="ChEBI" id="CHEBI:15378"/>
        <dbReference type="ChEBI" id="CHEBI:57287"/>
        <dbReference type="ChEBI" id="CHEBI:57288"/>
        <dbReference type="ChEBI" id="CHEBI:133384"/>
        <dbReference type="ChEBI" id="CHEBI:133385"/>
        <dbReference type="EC" id="2.3.1.258"/>
    </reaction>
</comment>
<comment type="subunit">
    <text evidence="1 3">Component of the N-terminal acetyltransferase E (NatE) complex at least composed of NAA10, NAA15 and NAA50 (By similarity). Interacts with NAA10 (By similarity). Interacts with NAA15 (By similarity). Predominantly interacts with NAA15 in the N-terminal acetyltransferase A complex (NatA complex); the interactions reduce the acetylation activity of the NatA complex (By similarity). Component of the N-terminal acetyltransferase E (NatE)/HYPK complex at least composed of NAA10, NAA15, NAA50 and HYPK (By similarity). Within the complex interacts with NAA15 (By similarity). Its capacity to interact with the NatA complex is reduced by HYPK (By similarity). Interacts with NAA35 (PubMed:16484612).</text>
</comment>
<comment type="subcellular location">
    <subcellularLocation>
        <location evidence="3">Cytoplasm</location>
    </subcellularLocation>
    <subcellularLocation>
        <location evidence="1">Nucleus</location>
    </subcellularLocation>
    <text evidence="1">Localizes to the cytoplasm in interphase cells.</text>
</comment>
<comment type="alternative products">
    <event type="alternative splicing"/>
    <isoform>
        <id>Q6PGB6-1</id>
        <name>1</name>
        <sequence type="displayed"/>
    </isoform>
    <isoform>
        <id>Q6PGB6-2</id>
        <name>2</name>
        <sequence type="described" ref="VSP_024749"/>
    </isoform>
    <isoform>
        <id>Q6PGB6-3</id>
        <name>3</name>
        <sequence type="described" ref="VSP_024750"/>
    </isoform>
    <isoform>
        <id>Q6PGB6-4</id>
        <name>4</name>
        <sequence type="described" ref="VSP_024748"/>
    </isoform>
    <isoform>
        <id>Q6PGB6-5</id>
        <name>5</name>
        <sequence type="described" ref="VSP_024749 VSP_024751"/>
    </isoform>
</comment>
<comment type="similarity">
    <text evidence="6">Belongs to the acetyltransferase family. GNAT subfamily.</text>
</comment>
<comment type="sequence caution" evidence="6">
    <conflict type="erroneous termination">
        <sequence resource="EMBL-CDS" id="BAE40319"/>
    </conflict>
    <text>Extended C-terminus.</text>
</comment>
<sequence>MKGSRIELGDVTPHNIKQLKRLNQVIFPVSYNDKFYKDVLEVGELAKLAYFNDIAVGAVCCRVDHSQNQKRLYIMTLGCLAPYRRLGIGTKMLNHVLNICEKDGTFDNIYLHVQISNESAIDFYRKFGFEIIETKKNYYKRIEPADAHVLQKNLKVPSGQNAETQKTDN</sequence>
<dbReference type="EC" id="2.3.1.258" evidence="1"/>
<dbReference type="EC" id="2.3.1.-" evidence="1"/>
<dbReference type="EMBL" id="AK011160">
    <property type="protein sequence ID" value="BAB27439.1"/>
    <property type="molecule type" value="mRNA"/>
</dbReference>
<dbReference type="EMBL" id="AK135658">
    <property type="protein sequence ID" value="BAE22602.1"/>
    <property type="molecule type" value="mRNA"/>
</dbReference>
<dbReference type="EMBL" id="AK145345">
    <property type="protein sequence ID" value="BAE26378.1"/>
    <property type="molecule type" value="mRNA"/>
</dbReference>
<dbReference type="EMBL" id="AK156791">
    <property type="protein sequence ID" value="BAE33858.1"/>
    <property type="molecule type" value="mRNA"/>
</dbReference>
<dbReference type="EMBL" id="AK167141">
    <property type="protein sequence ID" value="BAE39286.1"/>
    <property type="molecule type" value="mRNA"/>
</dbReference>
<dbReference type="EMBL" id="AK168394">
    <property type="protein sequence ID" value="BAE40319.1"/>
    <property type="status" value="ALT_SEQ"/>
    <property type="molecule type" value="mRNA"/>
</dbReference>
<dbReference type="EMBL" id="BC046283">
    <property type="protein sequence ID" value="AAH46283.1"/>
    <property type="molecule type" value="mRNA"/>
</dbReference>
<dbReference type="EMBL" id="BC055846">
    <property type="protein sequence ID" value="AAH55846.1"/>
    <property type="molecule type" value="mRNA"/>
</dbReference>
<dbReference type="EMBL" id="BC057117">
    <property type="protein sequence ID" value="AAH57117.1"/>
    <property type="molecule type" value="mRNA"/>
</dbReference>
<dbReference type="CCDS" id="CCDS28183.1">
    <molecule id="Q6PGB6-2"/>
</dbReference>
<dbReference type="CCDS" id="CCDS84236.1">
    <molecule id="Q6PGB6-1"/>
</dbReference>
<dbReference type="RefSeq" id="NP_001334168.1">
    <molecule id="Q6PGB6-1"/>
    <property type="nucleotide sequence ID" value="NM_001347239.1"/>
</dbReference>
<dbReference type="RefSeq" id="NP_082384.1">
    <molecule id="Q6PGB6-2"/>
    <property type="nucleotide sequence ID" value="NM_028108.3"/>
</dbReference>
<dbReference type="RefSeq" id="XP_036016025.1">
    <molecule id="Q6PGB6-4"/>
    <property type="nucleotide sequence ID" value="XM_036160132.1"/>
</dbReference>
<dbReference type="BMRB" id="Q6PGB6"/>
<dbReference type="SMR" id="Q6PGB6"/>
<dbReference type="BioGRID" id="215162">
    <property type="interactions" value="32"/>
</dbReference>
<dbReference type="FunCoup" id="Q6PGB6">
    <property type="interactions" value="4182"/>
</dbReference>
<dbReference type="IntAct" id="Q6PGB6">
    <property type="interactions" value="32"/>
</dbReference>
<dbReference type="MINT" id="Q6PGB6"/>
<dbReference type="STRING" id="10090.ENSMUSP00000124291"/>
<dbReference type="iPTMnet" id="Q6PGB6"/>
<dbReference type="PhosphoSitePlus" id="Q6PGB6"/>
<dbReference type="SwissPalm" id="Q6PGB6"/>
<dbReference type="PaxDb" id="10090-ENSMUSP00000070140"/>
<dbReference type="PeptideAtlas" id="Q6PGB6"/>
<dbReference type="ProteomicsDB" id="252638">
    <molecule id="Q6PGB6-1"/>
</dbReference>
<dbReference type="ProteomicsDB" id="252639">
    <molecule id="Q6PGB6-2"/>
</dbReference>
<dbReference type="ProteomicsDB" id="252640">
    <molecule id="Q6PGB6-3"/>
</dbReference>
<dbReference type="ProteomicsDB" id="252641">
    <molecule id="Q6PGB6-4"/>
</dbReference>
<dbReference type="ProteomicsDB" id="252642">
    <molecule id="Q6PGB6-5"/>
</dbReference>
<dbReference type="Pumba" id="Q6PGB6"/>
<dbReference type="Antibodypedia" id="32596">
    <property type="antibodies" value="164 antibodies from 28 providers"/>
</dbReference>
<dbReference type="DNASU" id="72117"/>
<dbReference type="Ensembl" id="ENSMUST00000063520.15">
    <molecule id="Q6PGB6-2"/>
    <property type="protein sequence ID" value="ENSMUSP00000070140.9"/>
    <property type="gene ID" value="ENSMUSG00000022698.18"/>
</dbReference>
<dbReference type="Ensembl" id="ENSMUST00000063542.8">
    <molecule id="Q6PGB6-3"/>
    <property type="protein sequence ID" value="ENSMUSP00000067361.8"/>
    <property type="gene ID" value="ENSMUSG00000022698.18"/>
</dbReference>
<dbReference type="Ensembl" id="ENSMUST00000159514.8">
    <molecule id="Q6PGB6-4"/>
    <property type="protein sequence ID" value="ENSMUSP00000125517.2"/>
    <property type="gene ID" value="ENSMUSG00000022698.18"/>
</dbReference>
<dbReference type="Ensembl" id="ENSMUST00000161326.8">
    <molecule id="Q6PGB6-1"/>
    <property type="protein sequence ID" value="ENSMUSP00000124291.2"/>
    <property type="gene ID" value="ENSMUSG00000022698.18"/>
</dbReference>
<dbReference type="GeneID" id="72117"/>
<dbReference type="KEGG" id="mmu:72117"/>
<dbReference type="UCSC" id="uc007zgy.1">
    <molecule id="Q6PGB6-2"/>
    <property type="organism name" value="mouse"/>
</dbReference>
<dbReference type="UCSC" id="uc007zgz.1">
    <molecule id="Q6PGB6-4"/>
    <property type="organism name" value="mouse"/>
</dbReference>
<dbReference type="UCSC" id="uc007zha.1">
    <molecule id="Q6PGB6-1"/>
    <property type="organism name" value="mouse"/>
</dbReference>
<dbReference type="UCSC" id="uc012afx.1">
    <molecule id="Q6PGB6-3"/>
    <property type="organism name" value="mouse"/>
</dbReference>
<dbReference type="AGR" id="MGI:1919367"/>
<dbReference type="CTD" id="80218"/>
<dbReference type="MGI" id="MGI:1919367">
    <property type="gene designation" value="Naa50"/>
</dbReference>
<dbReference type="VEuPathDB" id="HostDB:ENSMUSG00000022698"/>
<dbReference type="eggNOG" id="KOG3138">
    <property type="taxonomic scope" value="Eukaryota"/>
</dbReference>
<dbReference type="GeneTree" id="ENSGT00390000009110"/>
<dbReference type="HOGENOM" id="CLU_013985_5_3_1"/>
<dbReference type="InParanoid" id="Q6PGB6"/>
<dbReference type="OMA" id="ICCRLET"/>
<dbReference type="PhylomeDB" id="Q6PGB6"/>
<dbReference type="TreeFam" id="TF314841"/>
<dbReference type="BioGRID-ORCS" id="72117">
    <property type="hits" value="23 hits in 76 CRISPR screens"/>
</dbReference>
<dbReference type="ChiTaRS" id="Naa50">
    <property type="organism name" value="mouse"/>
</dbReference>
<dbReference type="PRO" id="PR:Q6PGB6"/>
<dbReference type="Proteomes" id="UP000000589">
    <property type="component" value="Chromosome 16"/>
</dbReference>
<dbReference type="RNAct" id="Q6PGB6">
    <property type="molecule type" value="protein"/>
</dbReference>
<dbReference type="Bgee" id="ENSMUSG00000022698">
    <property type="expression patterns" value="Expressed in ear vesicle and 233 other cell types or tissues"/>
</dbReference>
<dbReference type="GO" id="GO:0005737">
    <property type="term" value="C:cytoplasm"/>
    <property type="evidence" value="ECO:0000250"/>
    <property type="project" value="UniProtKB"/>
</dbReference>
<dbReference type="GO" id="GO:0005829">
    <property type="term" value="C:cytosol"/>
    <property type="evidence" value="ECO:0000250"/>
    <property type="project" value="UniProtKB"/>
</dbReference>
<dbReference type="GO" id="GO:0031415">
    <property type="term" value="C:NatA complex"/>
    <property type="evidence" value="ECO:0007669"/>
    <property type="project" value="Ensembl"/>
</dbReference>
<dbReference type="GO" id="GO:0005730">
    <property type="term" value="C:nucleolus"/>
    <property type="evidence" value="ECO:0007669"/>
    <property type="project" value="Ensembl"/>
</dbReference>
<dbReference type="GO" id="GO:0005634">
    <property type="term" value="C:nucleus"/>
    <property type="evidence" value="ECO:0000250"/>
    <property type="project" value="UniProtKB"/>
</dbReference>
<dbReference type="GO" id="GO:0010485">
    <property type="term" value="F:histone H4 acetyltransferase activity"/>
    <property type="evidence" value="ECO:0000250"/>
    <property type="project" value="UniProtKB"/>
</dbReference>
<dbReference type="GO" id="GO:0120518">
    <property type="term" value="F:protein N-terminal-methionine acetyltransferase activity"/>
    <property type="evidence" value="ECO:0007669"/>
    <property type="project" value="UniProtKB-EC"/>
</dbReference>
<dbReference type="GO" id="GO:0061733">
    <property type="term" value="F:protein-lysine-acetyltransferase activity"/>
    <property type="evidence" value="ECO:0000250"/>
    <property type="project" value="UniProtKB"/>
</dbReference>
<dbReference type="GO" id="GO:0004596">
    <property type="term" value="F:protein-N-terminal amino-acid acetyltransferase activity"/>
    <property type="evidence" value="ECO:0000250"/>
    <property type="project" value="UniProtKB"/>
</dbReference>
<dbReference type="GO" id="GO:0034087">
    <property type="term" value="P:establishment of mitotic sister chromatid cohesion"/>
    <property type="evidence" value="ECO:0000250"/>
    <property type="project" value="UniProtKB"/>
</dbReference>
<dbReference type="GO" id="GO:0071962">
    <property type="term" value="P:mitotic sister chromatid cohesion, centromeric"/>
    <property type="evidence" value="ECO:0000250"/>
    <property type="project" value="UniProtKB"/>
</dbReference>
<dbReference type="GO" id="GO:0006474">
    <property type="term" value="P:N-terminal protein amino acid acetylation"/>
    <property type="evidence" value="ECO:0000250"/>
    <property type="project" value="UniProtKB"/>
</dbReference>
<dbReference type="GO" id="GO:0043687">
    <property type="term" value="P:post-translational protein modification"/>
    <property type="evidence" value="ECO:0000314"/>
    <property type="project" value="HGNC-UCL"/>
</dbReference>
<dbReference type="CDD" id="cd04301">
    <property type="entry name" value="NAT_SF"/>
    <property type="match status" value="1"/>
</dbReference>
<dbReference type="FunFam" id="3.40.630.30:FF:000078">
    <property type="entry name" value="N-alpha-acetyltransferase 50"/>
    <property type="match status" value="1"/>
</dbReference>
<dbReference type="Gene3D" id="3.40.630.30">
    <property type="match status" value="1"/>
</dbReference>
<dbReference type="InterPro" id="IPR016181">
    <property type="entry name" value="Acyl_CoA_acyltransferase"/>
</dbReference>
<dbReference type="InterPro" id="IPR000182">
    <property type="entry name" value="GNAT_dom"/>
</dbReference>
<dbReference type="InterPro" id="IPR051556">
    <property type="entry name" value="N-term/lysine_N-AcTrnsfr"/>
</dbReference>
<dbReference type="PANTHER" id="PTHR42919">
    <property type="entry name" value="N-ALPHA-ACETYLTRANSFERASE"/>
    <property type="match status" value="1"/>
</dbReference>
<dbReference type="PANTHER" id="PTHR42919:SF41">
    <property type="entry name" value="N-ALPHA-ACETYLTRANSFERASE 50"/>
    <property type="match status" value="1"/>
</dbReference>
<dbReference type="Pfam" id="PF00583">
    <property type="entry name" value="Acetyltransf_1"/>
    <property type="match status" value="1"/>
</dbReference>
<dbReference type="SUPFAM" id="SSF55729">
    <property type="entry name" value="Acyl-CoA N-acyltransferases (Nat)"/>
    <property type="match status" value="1"/>
</dbReference>
<dbReference type="PROSITE" id="PS51186">
    <property type="entry name" value="GNAT"/>
    <property type="match status" value="1"/>
</dbReference>
<keyword id="KW-0007">Acetylation</keyword>
<keyword id="KW-0012">Acyltransferase</keyword>
<keyword id="KW-0025">Alternative splicing</keyword>
<keyword id="KW-0963">Cytoplasm</keyword>
<keyword id="KW-0539">Nucleus</keyword>
<keyword id="KW-0597">Phosphoprotein</keyword>
<keyword id="KW-1185">Reference proteome</keyword>
<keyword id="KW-0808">Transferase</keyword>
<feature type="chain" id="PRO_0000284903" description="N-alpha-acetyltransferase 50">
    <location>
        <begin position="1"/>
        <end position="169"/>
    </location>
</feature>
<feature type="domain" description="N-acetyltransferase" evidence="2">
    <location>
        <begin position="6"/>
        <end position="155"/>
    </location>
</feature>
<feature type="region of interest" description="Substrate" evidence="1">
    <location>
        <begin position="138"/>
        <end position="141"/>
    </location>
</feature>
<feature type="active site" evidence="1">
    <location>
        <position position="73"/>
    </location>
</feature>
<feature type="active site" evidence="1">
    <location>
        <position position="112"/>
    </location>
</feature>
<feature type="binding site" evidence="1">
    <location>
        <position position="31"/>
    </location>
    <ligand>
        <name>substrate</name>
    </ligand>
</feature>
<feature type="binding site" evidence="1">
    <location>
        <position position="75"/>
    </location>
    <ligand>
        <name>substrate</name>
    </ligand>
</feature>
<feature type="binding site" evidence="1">
    <location>
        <begin position="77"/>
        <end position="90"/>
    </location>
    <ligand>
        <name>acetyl-CoA</name>
        <dbReference type="ChEBI" id="CHEBI:57288"/>
    </ligand>
</feature>
<feature type="binding site" evidence="1">
    <location>
        <begin position="117"/>
        <end position="126"/>
    </location>
    <ligand>
        <name>CoA</name>
        <dbReference type="ChEBI" id="CHEBI:57287"/>
    </ligand>
</feature>
<feature type="modified residue" description="Phosphothreonine" evidence="1">
    <location>
        <position position="12"/>
    </location>
</feature>
<feature type="modified residue" description="N6-acetyllysine" evidence="8">
    <location>
        <position position="34"/>
    </location>
</feature>
<feature type="modified residue" description="N6-acetyllysine" evidence="8">
    <location>
        <position position="37"/>
    </location>
</feature>
<feature type="modified residue" description="Phosphotyrosine" evidence="1">
    <location>
        <position position="110"/>
    </location>
</feature>
<feature type="modified residue" description="N6-acetyllysine" evidence="1">
    <location>
        <position position="140"/>
    </location>
</feature>
<feature type="splice variant" id="VSP_024748" description="In isoform 4." evidence="5">
    <original>MKG</original>
    <variation>MPGTVGHEH</variation>
    <location>
        <begin position="1"/>
        <end position="3"/>
    </location>
</feature>
<feature type="splice variant" id="VSP_024749" description="In isoform 2 and isoform 5." evidence="4 5">
    <location>
        <position position="4"/>
    </location>
</feature>
<feature type="splice variant" id="VSP_024750" description="In isoform 3." evidence="4">
    <location>
        <begin position="49"/>
        <end position="88"/>
    </location>
</feature>
<feature type="splice variant" id="VSP_024751" description="In isoform 5." evidence="4">
    <original>EKDGTFDNIYLHVQISNESAIDFYRKFGFEIIETKKNYYKRIEPADAHVLQKNLKVPSGQNAETQKTDN</original>
    <variation>GWMDGWMDGWMDGRASEIVEIPCLFLGYQFPKQSKSKLRSLVLSTFTLMDKLQRALAKRRGHK</variation>
    <location>
        <begin position="101"/>
        <end position="169"/>
    </location>
</feature>
<evidence type="ECO:0000250" key="1">
    <source>
        <dbReference type="UniProtKB" id="Q9GZZ1"/>
    </source>
</evidence>
<evidence type="ECO:0000255" key="2">
    <source>
        <dbReference type="PROSITE-ProRule" id="PRU00532"/>
    </source>
</evidence>
<evidence type="ECO:0000269" key="3">
    <source>
    </source>
</evidence>
<evidence type="ECO:0000303" key="4">
    <source>
    </source>
</evidence>
<evidence type="ECO:0000303" key="5">
    <source>
    </source>
</evidence>
<evidence type="ECO:0000305" key="6"/>
<evidence type="ECO:0000312" key="7">
    <source>
        <dbReference type="MGI" id="MGI:1919367"/>
    </source>
</evidence>
<evidence type="ECO:0007744" key="8">
    <source>
    </source>
</evidence>